<name>LEF_BACAN</name>
<geneLocation type="plasmid">
    <name>pXO1</name>
</geneLocation>
<comment type="function">
    <text evidence="4 5 6 12 16 17 24 25 29 32 34 36">Lethal factor (LF), which constitutes one of the three proteins composing the anthrax toxin, is able to trigger rapid cell death in macrophages (PubMed:10475971, PubMed:11104681, PubMed:3711080, PubMed:8380282, PubMed:9563949, PubMed:9703991). Acts as a protease that cleaves the N-terminal of most dual specificity mitogen-activated protein kinase kinases (MAPKKs or MAP2Ks) (except for MAP2K5): cleavage invariably occurs within the N-terminal proline-rich region preceding the kinase domain, thus disrupting a sequence involved in directing specific protein-protein interactions necessary for the assembly of signaling complexes (PubMed:10475971, PubMed:11104681, PubMed:14718925, PubMed:9563949, PubMed:9703991). Also cleaves mouse Nlrp1b: host Nlrp1b cleavage promotes ubiquitination and degradation of the N-terminal part of Nlrp1b by the proteasome, thereby releasing the cleaved C-terminal part of Nlrp1b, which polymerizes and forms the Nlrp1b inflammasome followed by host cell pyroptosis (PubMed:10338520, PubMed:19651869, PubMed:30872531, PubMed:31268597). Able to cleave mouse Nlrp1b alleles 1 and 5, while it is not able to cleave Nlrp1b alleles 2, 3 and 4 (PubMed:16429160, PubMed:19651869). In contrast, does not cleave NLRP1 human ortholog (PubMed:19651869). LF is not toxic by itself and only acts as a lethal factor when associated with protective antigen (PA) to form the lethal toxin (LeTx): PA is required for LF translocation into the host cytosol (PubMed:10475971, PubMed:11104681, PubMed:9563949, PubMed:9703991).</text>
</comment>
<comment type="catalytic activity">
    <reaction evidence="12 34">
        <text>Preferred amino acids around the cleavage site can be denoted BBBBxHx-|-H, in which B denotes Arg or Lys, H denotes a hydrophobic amino acid, and x is any amino acid. The only known protein substrates are mitogen-activated protein (MAP) kinase kinases.</text>
        <dbReference type="EC" id="3.4.24.83"/>
    </reaction>
</comment>
<comment type="cofactor">
    <cofactor evidence="1 8 11 12 15 19 21 22 23 30">
        <name>Zn(2+)</name>
        <dbReference type="ChEBI" id="CHEBI:29105"/>
    </cofactor>
    <text evidence="1 11 12 15 19 21 22 23">Binds 1 zinc ion per subunit.</text>
</comment>
<comment type="activity regulation">
    <text evidence="12 19 21 22 23">Inhibited by NSC-12155 (1,3-Bis(2-methyl-4-aminoquinoline-6-yl)ure) (PubMed:14718925). Inhibited by phenoxyacetic acid bearing alpha-benzyl substituents on the C2-side chain (PubMed:22342144). Inhibited by sulfonamide hydroxamate with benzylic additions at the sulfonamide nitrogen (PubMed:25372673). Also inhibited by sulfonamide hydroxamates with alkylation at the sulfonamide nitrogen (PubMed:26492514). Inhibited by hydroxamic acid inhibitors (PubMed:26578066).</text>
</comment>
<comment type="subunit">
    <text evidence="3 14 18 26 27 28 33">Interacts (via ATLF domain 1) with the cleaved form of protective antigen (PA-63) anthrax toxin; interaction is required for LF translocation into the host cytoplasm (PubMed:10085027, PubMed:15313199, PubMed:21037566, PubMed:32047164, PubMed:32521227, PubMed:32810181, PubMed:8942659). Interacts with PA-63 homooligomers (either homoheptamers or homooctamers): three molecules of LF bind the PA-63 homoheptamer to form the PA(7)LF(3) complex, in which the relative position of the N-terminal alpha-helices in the three LFs determines which factor is translocated first (PubMed:32810181).</text>
</comment>
<comment type="interaction">
    <interactant intactId="EBI-456923">
        <id>P15917</id>
    </interactant>
    <interactant intactId="EBI-456868">
        <id>P13423</id>
        <label>pagA</label>
    </interactant>
    <organismsDiffer>false</organismsDiffer>
    <experiments>28</experiments>
</comment>
<comment type="subcellular location">
    <subcellularLocation>
        <location evidence="20">Secreted</location>
    </subcellularLocation>
    <subcellularLocation>
        <location evidence="13">Host cytoplasm</location>
        <location evidence="13">Host cytosol</location>
    </subcellularLocation>
    <text evidence="3 10 18 26 27 28 29 32">Translocation into host cytosol is mediated via interaction with the cleaved form of protective antigen (PA-63): following secretion, LF binds via its N-terminal region to the upper rim of the ring-shaped homooligomer formed by PA-63 on the host cell membrane (PubMed:21037566, PubMed:32810181). In this PA-63 pre-pore state, the N-terminal segment of LF refolds into an alpha helix engaged in the alpha-clamp of the PA-63 pre-pore (PubMed:32047164, PubMed:32521227). Loaded complexes are then endocytosed, followed by a conformational change of oligomerized PA-63 from the pre-pore to pore state, which is triggered by the low pH in the endosome (PubMed:10085027, PubMed:12551953, PubMed:3711080, PubMed:8380282). LF is then unfolded to pass through the PA-63 pore and translocate into the host cytosol (PubMed:21037566, PubMed:32047164, PubMed:32521227).</text>
</comment>
<comment type="induction">
    <text evidence="31">Positively transcriptionally regulated by AtxA, which, in turn, is induced by bicarbonate and high temperatures (37 degrees Celsius).</text>
</comment>
<comment type="domain">
    <text evidence="8">Lethal factor (LF) is composed of four domains: domain I contains the first ATLF domain that binds the membrane-translocating component protective antigen (PA); domains II, III and IV together create a long deep groove that holds the 16-residue N-terminal tail of MAPKK before cleavage (PubMed:11700563). Domain IV contains the catalytic center (PubMed:11700563).</text>
</comment>
<comment type="similarity">
    <text evidence="39">Belongs to the peptidase M34 family.</text>
</comment>
<dbReference type="EC" id="3.4.24.83" evidence="12 34"/>
<dbReference type="EMBL" id="M29081">
    <property type="protein sequence ID" value="AAA79216.1"/>
    <property type="molecule type" value="Genomic_DNA"/>
</dbReference>
<dbReference type="EMBL" id="M30210">
    <property type="protein sequence ID" value="AAA22569.1"/>
    <property type="molecule type" value="Genomic_DNA"/>
</dbReference>
<dbReference type="EMBL" id="AF065404">
    <property type="protein sequence ID" value="AAD32411.1"/>
    <property type="molecule type" value="Genomic_DNA"/>
</dbReference>
<dbReference type="EMBL" id="AE011190">
    <property type="protein sequence ID" value="AAM26117.1"/>
    <property type="molecule type" value="Genomic_DNA"/>
</dbReference>
<dbReference type="EMBL" id="AE017336">
    <property type="protein sequence ID" value="AAT28913.2"/>
    <property type="molecule type" value="Genomic_DNA"/>
</dbReference>
<dbReference type="EMBL" id="AJ413934">
    <property type="protein sequence ID" value="CAC93932.1"/>
    <property type="molecule type" value="Genomic_DNA"/>
</dbReference>
<dbReference type="EMBL" id="AJ413935">
    <property type="protein sequence ID" value="CAC93933.1"/>
    <property type="molecule type" value="Genomic_DNA"/>
</dbReference>
<dbReference type="PIR" id="JQ0032">
    <property type="entry name" value="JQ0032"/>
</dbReference>
<dbReference type="RefSeq" id="NP_052803.1">
    <property type="nucleotide sequence ID" value="NC_001496.1"/>
</dbReference>
<dbReference type="RefSeq" id="WP_001022097.1">
    <property type="nucleotide sequence ID" value="NZ_VTZH01000015.1"/>
</dbReference>
<dbReference type="RefSeq" id="WP_010890024.1">
    <property type="nucleotide sequence ID" value="NZ_VLYF01000013.1"/>
</dbReference>
<dbReference type="PDB" id="1J7N">
    <property type="method" value="X-ray"/>
    <property type="resolution" value="2.30 A"/>
    <property type="chains" value="A/B=34-809"/>
</dbReference>
<dbReference type="PDB" id="1JKY">
    <property type="method" value="X-ray"/>
    <property type="resolution" value="3.90 A"/>
    <property type="chains" value="A=34-809"/>
</dbReference>
<dbReference type="PDB" id="1PWP">
    <property type="method" value="X-ray"/>
    <property type="resolution" value="2.90 A"/>
    <property type="chains" value="A/B=34-809"/>
</dbReference>
<dbReference type="PDB" id="1PWQ">
    <property type="method" value="X-ray"/>
    <property type="resolution" value="3.52 A"/>
    <property type="chains" value="A/B=34-809"/>
</dbReference>
<dbReference type="PDB" id="1PWU">
    <property type="method" value="X-ray"/>
    <property type="resolution" value="2.70 A"/>
    <property type="chains" value="A/B=34-809"/>
</dbReference>
<dbReference type="PDB" id="1PWV">
    <property type="method" value="X-ray"/>
    <property type="resolution" value="2.85 A"/>
    <property type="chains" value="A/B=34-809"/>
</dbReference>
<dbReference type="PDB" id="1PWW">
    <property type="method" value="X-ray"/>
    <property type="resolution" value="2.80 A"/>
    <property type="chains" value="A/B=34-809"/>
</dbReference>
<dbReference type="PDB" id="1YQY">
    <property type="method" value="X-ray"/>
    <property type="resolution" value="2.30 A"/>
    <property type="chains" value="A=297-809"/>
</dbReference>
<dbReference type="PDB" id="1ZXV">
    <property type="method" value="X-ray"/>
    <property type="resolution" value="2.67 A"/>
    <property type="chains" value="A/B=34-809"/>
</dbReference>
<dbReference type="PDB" id="2L0R">
    <property type="method" value="NMR"/>
    <property type="chains" value="A=705-809"/>
</dbReference>
<dbReference type="PDB" id="3KWV">
    <property type="method" value="X-ray"/>
    <property type="resolution" value="3.10 A"/>
    <property type="chains" value="C/F=34-296"/>
</dbReference>
<dbReference type="PDB" id="4DV8">
    <property type="method" value="X-ray"/>
    <property type="resolution" value="1.63 A"/>
    <property type="chains" value="A=296-809"/>
</dbReference>
<dbReference type="PDB" id="4PKQ">
    <property type="method" value="X-ray"/>
    <property type="resolution" value="2.20 A"/>
    <property type="chains" value="A=298-809"/>
</dbReference>
<dbReference type="PDB" id="4PKR">
    <property type="method" value="X-ray"/>
    <property type="resolution" value="2.20 A"/>
    <property type="chains" value="A=298-809"/>
</dbReference>
<dbReference type="PDB" id="4PKS">
    <property type="method" value="X-ray"/>
    <property type="resolution" value="2.30 A"/>
    <property type="chains" value="A=298-809"/>
</dbReference>
<dbReference type="PDB" id="4PKT">
    <property type="method" value="X-ray"/>
    <property type="resolution" value="2.40 A"/>
    <property type="chains" value="A=298-809"/>
</dbReference>
<dbReference type="PDB" id="4PKU">
    <property type="method" value="X-ray"/>
    <property type="resolution" value="2.40 A"/>
    <property type="chains" value="A=298-809"/>
</dbReference>
<dbReference type="PDB" id="4PKV">
    <property type="method" value="X-ray"/>
    <property type="resolution" value="2.50 A"/>
    <property type="chains" value="A=298-809"/>
</dbReference>
<dbReference type="PDB" id="4PKW">
    <property type="method" value="X-ray"/>
    <property type="resolution" value="1.75 A"/>
    <property type="chains" value="A=298-809"/>
</dbReference>
<dbReference type="PDB" id="4WF6">
    <property type="method" value="X-ray"/>
    <property type="resolution" value="2.65 A"/>
    <property type="chains" value="A=298-809"/>
</dbReference>
<dbReference type="PDB" id="4XM6">
    <property type="method" value="X-ray"/>
    <property type="resolution" value="2.35 A"/>
    <property type="chains" value="A=298-809"/>
</dbReference>
<dbReference type="PDB" id="4XM7">
    <property type="method" value="X-ray"/>
    <property type="resolution" value="2.70 A"/>
    <property type="chains" value="A=298-809"/>
</dbReference>
<dbReference type="PDB" id="4XM8">
    <property type="method" value="X-ray"/>
    <property type="resolution" value="2.70 A"/>
    <property type="chains" value="A=298-809"/>
</dbReference>
<dbReference type="PDB" id="5D1S">
    <property type="method" value="X-ray"/>
    <property type="resolution" value="2.10 A"/>
    <property type="chains" value="A=298-809"/>
</dbReference>
<dbReference type="PDB" id="5D1T">
    <property type="method" value="X-ray"/>
    <property type="resolution" value="2.20 A"/>
    <property type="chains" value="A=298-809"/>
</dbReference>
<dbReference type="PDB" id="5D1U">
    <property type="method" value="X-ray"/>
    <property type="resolution" value="2.85 A"/>
    <property type="chains" value="A=298-809"/>
</dbReference>
<dbReference type="PDB" id="6PSN">
    <property type="method" value="EM"/>
    <property type="resolution" value="4.60 A"/>
    <property type="chains" value="L=1-809"/>
</dbReference>
<dbReference type="PDB" id="6WJJ">
    <property type="method" value="EM"/>
    <property type="resolution" value="3.80 A"/>
    <property type="chains" value="I/J/K/L=29-809"/>
</dbReference>
<dbReference type="PDB" id="6ZXJ">
    <property type="method" value="EM"/>
    <property type="resolution" value="3.50 A"/>
    <property type="chains" value="H/I=1-809"/>
</dbReference>
<dbReference type="PDB" id="6ZXK">
    <property type="method" value="EM"/>
    <property type="resolution" value="3.80 A"/>
    <property type="chains" value="H/I/J=1-809"/>
</dbReference>
<dbReference type="PDB" id="6ZXL">
    <property type="method" value="EM"/>
    <property type="resolution" value="4.20 A"/>
    <property type="chains" value="H/I/J=1-809"/>
</dbReference>
<dbReference type="PDB" id="7KXR">
    <property type="method" value="EM"/>
    <property type="resolution" value="3.30 A"/>
    <property type="chains" value="L=34-296"/>
</dbReference>
<dbReference type="PDBsum" id="1J7N"/>
<dbReference type="PDBsum" id="1JKY"/>
<dbReference type="PDBsum" id="1PWP"/>
<dbReference type="PDBsum" id="1PWQ"/>
<dbReference type="PDBsum" id="1PWU"/>
<dbReference type="PDBsum" id="1PWV"/>
<dbReference type="PDBsum" id="1PWW"/>
<dbReference type="PDBsum" id="1YQY"/>
<dbReference type="PDBsum" id="1ZXV"/>
<dbReference type="PDBsum" id="2L0R"/>
<dbReference type="PDBsum" id="3KWV"/>
<dbReference type="PDBsum" id="4DV8"/>
<dbReference type="PDBsum" id="4PKQ"/>
<dbReference type="PDBsum" id="4PKR"/>
<dbReference type="PDBsum" id="4PKS"/>
<dbReference type="PDBsum" id="4PKT"/>
<dbReference type="PDBsum" id="4PKU"/>
<dbReference type="PDBsum" id="4PKV"/>
<dbReference type="PDBsum" id="4PKW"/>
<dbReference type="PDBsum" id="4WF6"/>
<dbReference type="PDBsum" id="4XM6"/>
<dbReference type="PDBsum" id="4XM7"/>
<dbReference type="PDBsum" id="4XM8"/>
<dbReference type="PDBsum" id="5D1S"/>
<dbReference type="PDBsum" id="5D1T"/>
<dbReference type="PDBsum" id="5D1U"/>
<dbReference type="PDBsum" id="6PSN"/>
<dbReference type="PDBsum" id="6WJJ"/>
<dbReference type="PDBsum" id="6ZXJ"/>
<dbReference type="PDBsum" id="6ZXK"/>
<dbReference type="PDBsum" id="6ZXL"/>
<dbReference type="PDBsum" id="7KXR"/>
<dbReference type="BMRB" id="P15917"/>
<dbReference type="EMDB" id="EMD-11522"/>
<dbReference type="EMDB" id="EMD-11523"/>
<dbReference type="EMDB" id="EMD-11524"/>
<dbReference type="EMDB" id="EMD-11525"/>
<dbReference type="EMDB" id="EMD-20459"/>
<dbReference type="EMDB" id="EMD-23066"/>
<dbReference type="SMR" id="P15917"/>
<dbReference type="DIP" id="DIP-29871N"/>
<dbReference type="IntAct" id="P15917">
    <property type="interactions" value="6"/>
</dbReference>
<dbReference type="MINT" id="P15917"/>
<dbReference type="BindingDB" id="P15917"/>
<dbReference type="ChEMBL" id="CHEMBL4372"/>
<dbReference type="DrugBank" id="DB07290">
    <property type="generic name" value="(2R)-2-{[(4-FLUORO-3-METHYLPHENYL)SULFONYL]AMINO}-N-HYDROXY-2-TETRAHYDRO-2H-PYRAN-4-YLACETAMIDE"/>
</dbReference>
<dbReference type="DrugBank" id="DB08177">
    <property type="generic name" value="(E)-3-(5((5-(4-CHLOROPHENYL)FURAN-2-YL)METHYLENE)-4-OXO-2-THIOXOTHIAZOLIDIN-3-YL)PROPANOIC ACID"/>
</dbReference>
<dbReference type="DrugBank" id="DB04452">
    <property type="generic name" value="Aminoquinuride"/>
</dbReference>
<dbReference type="DrugBank" id="DB03777">
    <property type="generic name" value="Bisindolylmaleimide I"/>
</dbReference>
<dbReference type="DrugBank" id="DB07556">
    <property type="generic name" value="CGS-27023"/>
</dbReference>
<dbReference type="DrugBank" id="DB02255">
    <property type="generic name" value="Ilomastat"/>
</dbReference>
<dbReference type="DrugBank" id="DB01883">
    <property type="generic name" value="N-(Sulfanylacetyl)Tyrosylprolylmethioninamide"/>
</dbReference>
<dbReference type="DrugBank" id="DB17036">
    <property type="generic name" value="N-oleoyldopamine"/>
</dbReference>
<dbReference type="DrugCentral" id="P15917"/>
<dbReference type="MEROPS" id="M34.001"/>
<dbReference type="ABCD" id="P15917">
    <property type="antibodies" value="13 sequenced antibodies"/>
</dbReference>
<dbReference type="GeneID" id="45025515"/>
<dbReference type="KEGG" id="bar:GBAA_pXO1_0172"/>
<dbReference type="HOGENOM" id="CLU_348409_0_0_9"/>
<dbReference type="OMA" id="RMMARYE"/>
<dbReference type="BRENDA" id="3.4.24.83">
    <property type="organism ID" value="634"/>
</dbReference>
<dbReference type="Reactome" id="R-HSA-5210891">
    <property type="pathway name" value="Uptake and function of anthrax toxins"/>
</dbReference>
<dbReference type="EvolutionaryTrace" id="P15917"/>
<dbReference type="PHI-base" id="PHI:11905"/>
<dbReference type="PHI-base" id="PHI:4092"/>
<dbReference type="PRO" id="PR:P15917"/>
<dbReference type="Proteomes" id="UP000000594">
    <property type="component" value="Plasmid pXO1"/>
</dbReference>
<dbReference type="GO" id="GO:0005576">
    <property type="term" value="C:extracellular region"/>
    <property type="evidence" value="ECO:0007669"/>
    <property type="project" value="UniProtKB-SubCell"/>
</dbReference>
<dbReference type="GO" id="GO:0044164">
    <property type="term" value="C:host cell cytosol"/>
    <property type="evidence" value="ECO:0007669"/>
    <property type="project" value="UniProtKB-SubCell"/>
</dbReference>
<dbReference type="GO" id="GO:0004222">
    <property type="term" value="F:metalloendopeptidase activity"/>
    <property type="evidence" value="ECO:0000314"/>
    <property type="project" value="UniProtKB"/>
</dbReference>
<dbReference type="GO" id="GO:0008237">
    <property type="term" value="F:metallopeptidase activity"/>
    <property type="evidence" value="ECO:0000247"/>
    <property type="project" value="CACAO"/>
</dbReference>
<dbReference type="GO" id="GO:0090729">
    <property type="term" value="F:toxin activity"/>
    <property type="evidence" value="ECO:0000314"/>
    <property type="project" value="UniProtKB"/>
</dbReference>
<dbReference type="GO" id="GO:0008270">
    <property type="term" value="F:zinc ion binding"/>
    <property type="evidence" value="ECO:0000314"/>
    <property type="project" value="UniProtKB"/>
</dbReference>
<dbReference type="GO" id="GO:0006508">
    <property type="term" value="P:proteolysis"/>
    <property type="evidence" value="ECO:0000314"/>
    <property type="project" value="CACAO"/>
</dbReference>
<dbReference type="CDD" id="cd20493">
    <property type="entry name" value="M34_ATLF_C-like"/>
    <property type="match status" value="1"/>
</dbReference>
<dbReference type="CDD" id="cd20185">
    <property type="entry name" value="M34_PABD"/>
    <property type="match status" value="1"/>
</dbReference>
<dbReference type="Gene3D" id="3.40.390.10">
    <property type="entry name" value="Collagenase (Catalytic Domain)"/>
    <property type="match status" value="2"/>
</dbReference>
<dbReference type="Gene3D" id="3.90.176.10">
    <property type="entry name" value="Toxin ADP-ribosyltransferase, Chain A, domain 1"/>
    <property type="match status" value="2"/>
</dbReference>
<dbReference type="InterPro" id="IPR015239">
    <property type="entry name" value="Anthrax_LF_cen"/>
</dbReference>
<dbReference type="InterPro" id="IPR003541">
    <property type="entry name" value="Anthrax_toxin_lethal/edema"/>
</dbReference>
<dbReference type="InterPro" id="IPR014781">
    <property type="entry name" value="Anthrax_toxin_lethal/edema_N/C"/>
</dbReference>
<dbReference type="InterPro" id="IPR047568">
    <property type="entry name" value="ATLF-like_dom"/>
</dbReference>
<dbReference type="InterPro" id="IPR024079">
    <property type="entry name" value="MetalloPept_cat_dom_sf"/>
</dbReference>
<dbReference type="Pfam" id="PF09156">
    <property type="entry name" value="Anthrax-tox_M"/>
    <property type="match status" value="1"/>
</dbReference>
<dbReference type="Pfam" id="PF07737">
    <property type="entry name" value="ATLF"/>
    <property type="match status" value="2"/>
</dbReference>
<dbReference type="PRINTS" id="PR01392">
    <property type="entry name" value="ANTHRAXTOXNA"/>
</dbReference>
<dbReference type="SUPFAM" id="SSF56399">
    <property type="entry name" value="ADP-ribosylation"/>
    <property type="match status" value="1"/>
</dbReference>
<dbReference type="SUPFAM" id="SSF55486">
    <property type="entry name" value="Metalloproteases ('zincins'), catalytic domain"/>
    <property type="match status" value="2"/>
</dbReference>
<dbReference type="PROSITE" id="PS51995">
    <property type="entry name" value="ATLF"/>
    <property type="match status" value="2"/>
</dbReference>
<dbReference type="PROSITE" id="PS00142">
    <property type="entry name" value="ZINC_PROTEASE"/>
    <property type="match status" value="1"/>
</dbReference>
<feature type="signal peptide" evidence="20">
    <location>
        <begin position="1"/>
        <end position="33"/>
    </location>
</feature>
<feature type="chain" id="PRO_0000029233" description="Lethal factor">
    <location>
        <begin position="34"/>
        <end position="809"/>
    </location>
</feature>
<feature type="domain" description="ATLF-like 1" evidence="1">
    <location>
        <begin position="70"/>
        <end position="282"/>
    </location>
</feature>
<feature type="repeat" description="1" evidence="37">
    <location>
        <begin position="315"/>
        <end position="333"/>
    </location>
</feature>
<feature type="repeat" description="2" evidence="37">
    <location>
        <begin position="342"/>
        <end position="357"/>
    </location>
</feature>
<feature type="repeat" description="3" evidence="37">
    <location>
        <begin position="360"/>
        <end position="378"/>
    </location>
</feature>
<feature type="repeat" description="4" evidence="37">
    <location>
        <begin position="380"/>
        <end position="397"/>
    </location>
</feature>
<feature type="repeat" description="5" evidence="37">
    <location>
        <begin position="399"/>
        <end position="416"/>
    </location>
</feature>
<feature type="domain" description="ATLF-like 2" evidence="1">
    <location>
        <begin position="609"/>
        <end position="804"/>
    </location>
</feature>
<feature type="region of interest" description="Disordered" evidence="2">
    <location>
        <begin position="39"/>
        <end position="66"/>
    </location>
</feature>
<feature type="region of interest" description="I; PA-binding region" evidence="37">
    <location>
        <begin position="60"/>
        <end position="295"/>
    </location>
</feature>
<feature type="region of interest" description="IIA" evidence="37">
    <location>
        <begin position="296"/>
        <end position="330"/>
    </location>
</feature>
<feature type="region of interest" description="5 X approximate repeats" evidence="37">
    <location>
        <begin position="315"/>
        <end position="416"/>
    </location>
</feature>
<feature type="region of interest" description="III" evidence="37">
    <location>
        <begin position="336"/>
        <end position="416"/>
    </location>
</feature>
<feature type="region of interest" description="IIB" evidence="37">
    <location>
        <begin position="420"/>
        <end position="583"/>
    </location>
</feature>
<feature type="region of interest" description="IV" evidence="37">
    <location>
        <begin position="585"/>
        <end position="809"/>
    </location>
</feature>
<feature type="compositionally biased region" description="Basic and acidic residues" evidence="2">
    <location>
        <begin position="40"/>
        <end position="66"/>
    </location>
</feature>
<feature type="active site" description="Proton acceptor" evidence="1 17 35">
    <location>
        <position position="720"/>
    </location>
</feature>
<feature type="binding site" evidence="1 8 11 12 15 19 21 22 23 40 42 43 44 46 47 50 51 52 53 54 56 57 58 59 60 62 63">
    <location>
        <position position="719"/>
    </location>
    <ligand>
        <name>Zn(2+)</name>
        <dbReference type="ChEBI" id="CHEBI:29105"/>
        <note>catalytic</note>
    </ligand>
</feature>
<feature type="binding site" evidence="1 8 11 12 15 19 21 22 23 40 42 43 44 46 47 50 51 52 53 54 56 57 58 59 60 62 63">
    <location>
        <position position="723"/>
    </location>
    <ligand>
        <name>Zn(2+)</name>
        <dbReference type="ChEBI" id="CHEBI:29105"/>
        <note>catalytic</note>
    </ligand>
</feature>
<feature type="binding site" evidence="1">
    <location>
        <position position="761"/>
    </location>
    <ligand>
        <name>Zn(2+)</name>
        <dbReference type="ChEBI" id="CHEBI:29105"/>
        <note>catalytic</note>
    </ligand>
</feature>
<feature type="binding site" evidence="1 8 11 12 15 19 21 22 23 40 42 43 44 46 47 50 51 52 53 54 56 57 58 59 60 62 63">
    <location>
        <position position="768"/>
    </location>
    <ligand>
        <name>Zn(2+)</name>
        <dbReference type="ChEBI" id="CHEBI:29105"/>
        <note>catalytic</note>
    </ligand>
</feature>
<feature type="sequence variant" description="In strain: Sterne.">
    <original>A</original>
    <variation>S</variation>
    <location>
        <position position="299"/>
    </location>
</feature>
<feature type="mutagenesis site" description="Impaired translocation into host cytoplasm." evidence="18">
    <original>H</original>
    <variation>A</variation>
    <variation>Y</variation>
    <location>
        <position position="68"/>
    </location>
</feature>
<feature type="mutagenesis site" description="Does not affect translocation into host cytoplasm." evidence="18">
    <original>L</original>
    <variation>A</variation>
    <location>
        <position position="69"/>
    </location>
</feature>
<feature type="mutagenesis site" description="Does not affect translocation into host cytoplasm." evidence="18">
    <original>I</original>
    <variation>A</variation>
    <location>
        <position position="72"/>
    </location>
</feature>
<feature type="mutagenesis site" description="Impaired translocation into host cytoplasm." evidence="18">
    <original>M</original>
    <variation>A</variation>
    <location>
        <position position="73"/>
    </location>
</feature>
<feature type="mutagenesis site" description="Impaired translocation into host cytoplasm." evidence="18">
    <original>H</original>
    <variation>A</variation>
    <location>
        <position position="75"/>
    </location>
</feature>
<feature type="mutagenesis site" description="Does not affect translocation into host cytoplasm." evidence="18">
    <original>I</original>
    <variation>A</variation>
    <location>
        <position position="76"/>
    </location>
</feature>
<feature type="mutagenesis site" description="No effect on PA-binding ability." evidence="7">
    <original>V</original>
    <variation>A</variation>
    <location>
        <position position="180"/>
    </location>
</feature>
<feature type="mutagenesis site" description="Loss of ability to bind to PA." evidence="7">
    <original>Y</original>
    <variation>A</variation>
    <location>
        <position position="181"/>
    </location>
</feature>
<feature type="mutagenesis site" description="Loss of ability to bind to PA." evidence="7">
    <original>Y</original>
    <variation>A</variation>
    <location>
        <position position="182"/>
    </location>
</feature>
<feature type="mutagenesis site" description="No effect on PA-binding ability." evidence="7">
    <original>E</original>
    <variation>A</variation>
    <location>
        <position position="183"/>
    </location>
</feature>
<feature type="mutagenesis site" description="Loss of ability to bind to PA." evidence="7">
    <original>I</original>
    <variation>A</variation>
    <location>
        <position position="184"/>
    </location>
</feature>
<feature type="mutagenesis site" description="No effect on PA-binding ability." evidence="7">
    <original>G</original>
    <variation>A</variation>
    <location>
        <position position="185"/>
    </location>
</feature>
<feature type="mutagenesis site" description="Loss of ability to bind to PA." evidence="7">
    <original>K</original>
    <variation>A</variation>
    <location>
        <position position="186"/>
    </location>
</feature>
<feature type="mutagenesis site" description="Loss of ability to bind to PA and loss of toxicity." evidence="9">
    <original>D</original>
    <variation>A</variation>
    <location>
        <position position="220"/>
    </location>
</feature>
<feature type="mutagenesis site" description="No effect on PA-binding ability and fully toxic." evidence="9">
    <original>L</original>
    <variation>A</variation>
    <location>
        <position position="221"/>
    </location>
</feature>
<feature type="mutagenesis site" description="No effect on PA-binding ability and fully toxic." evidence="9">
    <original>L</original>
    <variation>A</variation>
    <location>
        <position position="222"/>
    </location>
</feature>
<feature type="mutagenesis site" description="Loss of ability to bind to PA and non-toxic." evidence="9">
    <original>F</original>
    <variation>A</variation>
    <location>
        <position position="223"/>
    </location>
</feature>
<feature type="mutagenesis site" description="Impaired interaction with interaction with the cleaved form of protective antigen (PA-63)." evidence="18">
    <original>Y</original>
    <variation>A</variation>
    <location>
        <position position="269"/>
    </location>
</feature>
<feature type="mutagenesis site" description="Loss of activity and zinc binding." evidence="35">
    <original>H</original>
    <variation>A</variation>
    <location>
        <position position="719"/>
    </location>
</feature>
<feature type="mutagenesis site" description="Loss of activity. No effect on zinc binding." evidence="17 35">
    <original>E</original>
    <variation>C</variation>
    <variation>D</variation>
    <location>
        <position position="720"/>
    </location>
</feature>
<feature type="mutagenesis site" description="Loss of activity and zinc binding." evidence="35">
    <original>H</original>
    <variation>A</variation>
    <location>
        <position position="723"/>
    </location>
</feature>
<feature type="turn" evidence="70">
    <location>
        <begin position="62"/>
        <end position="65"/>
    </location>
</feature>
<feature type="helix" evidence="70">
    <location>
        <begin position="66"/>
        <end position="76"/>
    </location>
</feature>
<feature type="strand" evidence="70">
    <location>
        <begin position="77"/>
        <end position="80"/>
    </location>
</feature>
<feature type="helix" evidence="70">
    <location>
        <begin position="87"/>
        <end position="97"/>
    </location>
</feature>
<feature type="helix" evidence="70">
    <location>
        <begin position="101"/>
        <end position="109"/>
    </location>
</feature>
<feature type="strand" evidence="70">
    <location>
        <begin position="113"/>
        <end position="119"/>
    </location>
</feature>
<feature type="helix" evidence="70">
    <location>
        <begin position="121"/>
        <end position="123"/>
    </location>
</feature>
<feature type="helix" evidence="70">
    <location>
        <begin position="125"/>
        <end position="127"/>
    </location>
</feature>
<feature type="helix" evidence="70">
    <location>
        <begin position="132"/>
        <end position="135"/>
    </location>
</feature>
<feature type="strand" evidence="70">
    <location>
        <begin position="136"/>
        <end position="138"/>
    </location>
</feature>
<feature type="strand" evidence="70">
    <location>
        <begin position="144"/>
        <end position="146"/>
    </location>
</feature>
<feature type="helix" evidence="70">
    <location>
        <begin position="147"/>
        <end position="149"/>
    </location>
</feature>
<feature type="strand" evidence="70">
    <location>
        <begin position="151"/>
        <end position="155"/>
    </location>
</feature>
<feature type="strand" evidence="70">
    <location>
        <begin position="157"/>
        <end position="159"/>
    </location>
</feature>
<feature type="strand" evidence="70">
    <location>
        <begin position="161"/>
        <end position="165"/>
    </location>
</feature>
<feature type="turn" evidence="70">
    <location>
        <begin position="170"/>
        <end position="172"/>
    </location>
</feature>
<feature type="helix" evidence="70">
    <location>
        <begin position="174"/>
        <end position="190"/>
    </location>
</feature>
<feature type="helix" evidence="70">
    <location>
        <begin position="193"/>
        <end position="196"/>
    </location>
</feature>
<feature type="helix" evidence="70">
    <location>
        <begin position="201"/>
        <end position="211"/>
    </location>
</feature>
<feature type="strand" evidence="70">
    <location>
        <begin position="213"/>
        <end position="216"/>
    </location>
</feature>
<feature type="helix" evidence="70">
    <location>
        <begin position="217"/>
        <end position="222"/>
    </location>
</feature>
<feature type="helix" evidence="70">
    <location>
        <begin position="225"/>
        <end position="228"/>
    </location>
</feature>
<feature type="helix" evidence="70">
    <location>
        <begin position="236"/>
        <end position="240"/>
    </location>
</feature>
<feature type="helix" evidence="70">
    <location>
        <begin position="243"/>
        <end position="258"/>
    </location>
</feature>
<feature type="helix" evidence="70">
    <location>
        <begin position="260"/>
        <end position="269"/>
    </location>
</feature>
<feature type="helix" evidence="70">
    <location>
        <begin position="271"/>
        <end position="282"/>
    </location>
</feature>
<feature type="helix" evidence="70">
    <location>
        <begin position="284"/>
        <end position="293"/>
    </location>
</feature>
<feature type="helix" evidence="73">
    <location>
        <begin position="300"/>
        <end position="310"/>
    </location>
</feature>
<feature type="helix" evidence="73">
    <location>
        <begin position="312"/>
        <end position="317"/>
    </location>
</feature>
<feature type="helix" evidence="73">
    <location>
        <begin position="320"/>
        <end position="330"/>
    </location>
</feature>
<feature type="helix" evidence="73">
    <location>
        <begin position="337"/>
        <end position="342"/>
    </location>
</feature>
<feature type="helix" evidence="73">
    <location>
        <begin position="346"/>
        <end position="354"/>
    </location>
</feature>
<feature type="helix" evidence="73">
    <location>
        <begin position="357"/>
        <end position="359"/>
    </location>
</feature>
<feature type="strand" evidence="76">
    <location>
        <begin position="361"/>
        <end position="363"/>
    </location>
</feature>
<feature type="helix" evidence="73">
    <location>
        <begin position="365"/>
        <end position="379"/>
    </location>
</feature>
<feature type="strand" evidence="74">
    <location>
        <begin position="381"/>
        <end position="383"/>
    </location>
</feature>
<feature type="helix" evidence="73">
    <location>
        <begin position="384"/>
        <end position="389"/>
    </location>
</feature>
<feature type="turn" evidence="77">
    <location>
        <begin position="390"/>
        <end position="392"/>
    </location>
</feature>
<feature type="turn" evidence="75">
    <location>
        <begin position="393"/>
        <end position="396"/>
    </location>
</feature>
<feature type="helix" evidence="73">
    <location>
        <begin position="403"/>
        <end position="412"/>
    </location>
</feature>
<feature type="helix" evidence="73">
    <location>
        <begin position="413"/>
        <end position="415"/>
    </location>
</feature>
<feature type="helix" evidence="73">
    <location>
        <begin position="421"/>
        <end position="428"/>
    </location>
</feature>
<feature type="strand" evidence="73">
    <location>
        <begin position="435"/>
        <end position="437"/>
    </location>
</feature>
<feature type="helix" evidence="73">
    <location>
        <begin position="439"/>
        <end position="455"/>
    </location>
</feature>
<feature type="strand" evidence="71">
    <location>
        <begin position="458"/>
        <end position="460"/>
    </location>
</feature>
<feature type="helix" evidence="73">
    <location>
        <begin position="461"/>
        <end position="464"/>
    </location>
</feature>
<feature type="turn" evidence="73">
    <location>
        <begin position="465"/>
        <end position="467"/>
    </location>
</feature>
<feature type="strand" evidence="73">
    <location>
        <begin position="470"/>
        <end position="474"/>
    </location>
</feature>
<feature type="helix" evidence="73">
    <location>
        <begin position="476"/>
        <end position="478"/>
    </location>
</feature>
<feature type="helix" evidence="73">
    <location>
        <begin position="481"/>
        <end position="484"/>
    </location>
</feature>
<feature type="strand" evidence="78">
    <location>
        <begin position="486"/>
        <end position="488"/>
    </location>
</feature>
<feature type="helix" evidence="73">
    <location>
        <begin position="498"/>
        <end position="505"/>
    </location>
</feature>
<feature type="strand" evidence="73">
    <location>
        <begin position="510"/>
        <end position="515"/>
    </location>
</feature>
<feature type="strand" evidence="73">
    <location>
        <begin position="518"/>
        <end position="522"/>
    </location>
</feature>
<feature type="strand" evidence="73">
    <location>
        <begin position="532"/>
        <end position="537"/>
    </location>
</feature>
<feature type="strand" evidence="73">
    <location>
        <begin position="543"/>
        <end position="547"/>
    </location>
</feature>
<feature type="turn" evidence="73">
    <location>
        <begin position="548"/>
        <end position="550"/>
    </location>
</feature>
<feature type="strand" evidence="73">
    <location>
        <begin position="551"/>
        <end position="554"/>
    </location>
</feature>
<feature type="strand" evidence="73">
    <location>
        <begin position="556"/>
        <end position="570"/>
    </location>
</feature>
<feature type="strand" evidence="73">
    <location>
        <begin position="573"/>
        <end position="583"/>
    </location>
</feature>
<feature type="helix" evidence="73">
    <location>
        <begin position="585"/>
        <end position="607"/>
    </location>
</feature>
<feature type="strand" evidence="73">
    <location>
        <begin position="616"/>
        <end position="619"/>
    </location>
</feature>
<feature type="helix" evidence="73">
    <location>
        <begin position="625"/>
        <end position="642"/>
    </location>
</feature>
<feature type="helix" evidence="73">
    <location>
        <begin position="645"/>
        <end position="657"/>
    </location>
</feature>
<feature type="strand" evidence="73">
    <location>
        <begin position="662"/>
        <end position="667"/>
    </location>
</feature>
<feature type="helix" evidence="73">
    <location>
        <begin position="669"/>
        <end position="671"/>
    </location>
</feature>
<feature type="helix" evidence="73">
    <location>
        <begin position="673"/>
        <end position="676"/>
    </location>
</feature>
<feature type="helix" evidence="73">
    <location>
        <begin position="682"/>
        <end position="684"/>
    </location>
</feature>
<feature type="strand" evidence="73">
    <location>
        <begin position="688"/>
        <end position="693"/>
    </location>
</feature>
<feature type="helix" evidence="73">
    <location>
        <begin position="694"/>
        <end position="696"/>
    </location>
</feature>
<feature type="strand" evidence="73">
    <location>
        <begin position="698"/>
        <end position="705"/>
    </location>
</feature>
<feature type="turn" evidence="72">
    <location>
        <begin position="709"/>
        <end position="711"/>
    </location>
</feature>
<feature type="helix" evidence="73">
    <location>
        <begin position="713"/>
        <end position="733"/>
    </location>
</feature>
<feature type="strand" evidence="73">
    <location>
        <begin position="735"/>
        <end position="737"/>
    </location>
</feature>
<feature type="helix" evidence="73">
    <location>
        <begin position="741"/>
        <end position="743"/>
    </location>
</feature>
<feature type="helix" evidence="73">
    <location>
        <begin position="745"/>
        <end position="754"/>
    </location>
</feature>
<feature type="turn" evidence="75">
    <location>
        <begin position="755"/>
        <end position="757"/>
    </location>
</feature>
<feature type="helix" evidence="73">
    <location>
        <begin position="761"/>
        <end position="763"/>
    </location>
</feature>
<feature type="helix" evidence="73">
    <location>
        <begin position="766"/>
        <end position="777"/>
    </location>
</feature>
<feature type="helix" evidence="73">
    <location>
        <begin position="782"/>
        <end position="791"/>
    </location>
</feature>
<feature type="helix" evidence="73">
    <location>
        <begin position="793"/>
        <end position="807"/>
    </location>
</feature>
<organism>
    <name type="scientific">Bacillus anthracis</name>
    <dbReference type="NCBI Taxonomy" id="1392"/>
    <lineage>
        <taxon>Bacteria</taxon>
        <taxon>Bacillati</taxon>
        <taxon>Bacillota</taxon>
        <taxon>Bacilli</taxon>
        <taxon>Bacillales</taxon>
        <taxon>Bacillaceae</taxon>
        <taxon>Bacillus</taxon>
        <taxon>Bacillus cereus group</taxon>
    </lineage>
</organism>
<protein>
    <recommendedName>
        <fullName evidence="38">Lethal factor</fullName>
        <shortName evidence="38">LF</shortName>
        <ecNumber evidence="12 34">3.4.24.83</ecNumber>
    </recommendedName>
    <alternativeName>
        <fullName evidence="39">Anthrax lethal toxin endopeptidase component</fullName>
    </alternativeName>
</protein>
<evidence type="ECO:0000255" key="1">
    <source>
        <dbReference type="PROSITE-ProRule" id="PRU01339"/>
    </source>
</evidence>
<evidence type="ECO:0000256" key="2">
    <source>
        <dbReference type="SAM" id="MobiDB-lite"/>
    </source>
</evidence>
<evidence type="ECO:0000269" key="3">
    <source>
    </source>
</evidence>
<evidence type="ECO:0000269" key="4">
    <source>
    </source>
</evidence>
<evidence type="ECO:0000269" key="5">
    <source>
    </source>
</evidence>
<evidence type="ECO:0000269" key="6">
    <source>
    </source>
</evidence>
<evidence type="ECO:0000269" key="7">
    <source>
    </source>
</evidence>
<evidence type="ECO:0000269" key="8">
    <source>
    </source>
</evidence>
<evidence type="ECO:0000269" key="9">
    <source>
    </source>
</evidence>
<evidence type="ECO:0000269" key="10">
    <source>
    </source>
</evidence>
<evidence type="ECO:0000269" key="11">
    <source>
    </source>
</evidence>
<evidence type="ECO:0000269" key="12">
    <source>
    </source>
</evidence>
<evidence type="ECO:0000269" key="13">
    <source>
    </source>
</evidence>
<evidence type="ECO:0000269" key="14">
    <source>
    </source>
</evidence>
<evidence type="ECO:0000269" key="15">
    <source>
    </source>
</evidence>
<evidence type="ECO:0000269" key="16">
    <source>
    </source>
</evidence>
<evidence type="ECO:0000269" key="17">
    <source>
    </source>
</evidence>
<evidence type="ECO:0000269" key="18">
    <source>
    </source>
</evidence>
<evidence type="ECO:0000269" key="19">
    <source>
    </source>
</evidence>
<evidence type="ECO:0000269" key="20">
    <source>
    </source>
</evidence>
<evidence type="ECO:0000269" key="21">
    <source>
    </source>
</evidence>
<evidence type="ECO:0000269" key="22">
    <source>
    </source>
</evidence>
<evidence type="ECO:0000269" key="23">
    <source>
    </source>
</evidence>
<evidence type="ECO:0000269" key="24">
    <source>
    </source>
</evidence>
<evidence type="ECO:0000269" key="25">
    <source>
    </source>
</evidence>
<evidence type="ECO:0000269" key="26">
    <source>
    </source>
</evidence>
<evidence type="ECO:0000269" key="27">
    <source>
    </source>
</evidence>
<evidence type="ECO:0000269" key="28">
    <source>
    </source>
</evidence>
<evidence type="ECO:0000269" key="29">
    <source>
    </source>
</evidence>
<evidence type="ECO:0000269" key="30">
    <source>
    </source>
</evidence>
<evidence type="ECO:0000269" key="31">
    <source>
    </source>
</evidence>
<evidence type="ECO:0000269" key="32">
    <source>
    </source>
</evidence>
<evidence type="ECO:0000269" key="33">
    <source>
    </source>
</evidence>
<evidence type="ECO:0000269" key="34">
    <source>
    </source>
</evidence>
<evidence type="ECO:0000269" key="35">
    <source>
    </source>
</evidence>
<evidence type="ECO:0000269" key="36">
    <source>
    </source>
</evidence>
<evidence type="ECO:0000303" key="37">
    <source>
    </source>
</evidence>
<evidence type="ECO:0000303" key="38">
    <source>
    </source>
</evidence>
<evidence type="ECO:0000305" key="39"/>
<evidence type="ECO:0007744" key="40">
    <source>
        <dbReference type="PDB" id="1J7N"/>
    </source>
</evidence>
<evidence type="ECO:0007744" key="41">
    <source>
        <dbReference type="PDB" id="1JKY"/>
    </source>
</evidence>
<evidence type="ECO:0007744" key="42">
    <source>
        <dbReference type="PDB" id="1PWP"/>
    </source>
</evidence>
<evidence type="ECO:0007744" key="43">
    <source>
        <dbReference type="PDB" id="1PWQ"/>
    </source>
</evidence>
<evidence type="ECO:0007744" key="44">
    <source>
        <dbReference type="PDB" id="1PWU"/>
    </source>
</evidence>
<evidence type="ECO:0007744" key="45">
    <source>
        <dbReference type="PDB" id="1PWV"/>
    </source>
</evidence>
<evidence type="ECO:0007744" key="46">
    <source>
        <dbReference type="PDB" id="1PWW"/>
    </source>
</evidence>
<evidence type="ECO:0007744" key="47">
    <source>
        <dbReference type="PDB" id="1YQY"/>
    </source>
</evidence>
<evidence type="ECO:0007744" key="48">
    <source>
        <dbReference type="PDB" id="2L0R"/>
    </source>
</evidence>
<evidence type="ECO:0007744" key="49">
    <source>
        <dbReference type="PDB" id="3KWV"/>
    </source>
</evidence>
<evidence type="ECO:0007744" key="50">
    <source>
        <dbReference type="PDB" id="4DV8"/>
    </source>
</evidence>
<evidence type="ECO:0007744" key="51">
    <source>
        <dbReference type="PDB" id="4PKQ"/>
    </source>
</evidence>
<evidence type="ECO:0007744" key="52">
    <source>
        <dbReference type="PDB" id="4PKR"/>
    </source>
</evidence>
<evidence type="ECO:0007744" key="53">
    <source>
        <dbReference type="PDB" id="4PKS"/>
    </source>
</evidence>
<evidence type="ECO:0007744" key="54">
    <source>
        <dbReference type="PDB" id="4PKT"/>
    </source>
</evidence>
<evidence type="ECO:0007744" key="55">
    <source>
        <dbReference type="PDB" id="4PKU"/>
    </source>
</evidence>
<evidence type="ECO:0007744" key="56">
    <source>
        <dbReference type="PDB" id="4PKV"/>
    </source>
</evidence>
<evidence type="ECO:0007744" key="57">
    <source>
        <dbReference type="PDB" id="4PKW"/>
    </source>
</evidence>
<evidence type="ECO:0007744" key="58">
    <source>
        <dbReference type="PDB" id="4WF6"/>
    </source>
</evidence>
<evidence type="ECO:0007744" key="59">
    <source>
        <dbReference type="PDB" id="4XM6"/>
    </source>
</evidence>
<evidence type="ECO:0007744" key="60">
    <source>
        <dbReference type="PDB" id="4XM7"/>
    </source>
</evidence>
<evidence type="ECO:0007744" key="61">
    <source>
        <dbReference type="PDB" id="4XM8"/>
    </source>
</evidence>
<evidence type="ECO:0007744" key="62">
    <source>
        <dbReference type="PDB" id="5D1S"/>
    </source>
</evidence>
<evidence type="ECO:0007744" key="63">
    <source>
        <dbReference type="PDB" id="5D1T"/>
    </source>
</evidence>
<evidence type="ECO:0007744" key="64">
    <source>
        <dbReference type="PDB" id="5D1U"/>
    </source>
</evidence>
<evidence type="ECO:0007744" key="65">
    <source>
        <dbReference type="PDB" id="6PSN"/>
    </source>
</evidence>
<evidence type="ECO:0007744" key="66">
    <source>
        <dbReference type="PDB" id="6WJJ"/>
    </source>
</evidence>
<evidence type="ECO:0007744" key="67">
    <source>
        <dbReference type="PDB" id="6ZXJ"/>
    </source>
</evidence>
<evidence type="ECO:0007744" key="68">
    <source>
        <dbReference type="PDB" id="6ZXK"/>
    </source>
</evidence>
<evidence type="ECO:0007744" key="69">
    <source>
        <dbReference type="PDB" id="6ZXL"/>
    </source>
</evidence>
<evidence type="ECO:0007829" key="70">
    <source>
        <dbReference type="PDB" id="1J7N"/>
    </source>
</evidence>
<evidence type="ECO:0007829" key="71">
    <source>
        <dbReference type="PDB" id="1PWV"/>
    </source>
</evidence>
<evidence type="ECO:0007829" key="72">
    <source>
        <dbReference type="PDB" id="2L0R"/>
    </source>
</evidence>
<evidence type="ECO:0007829" key="73">
    <source>
        <dbReference type="PDB" id="4DV8"/>
    </source>
</evidence>
<evidence type="ECO:0007829" key="74">
    <source>
        <dbReference type="PDB" id="4PKR"/>
    </source>
</evidence>
<evidence type="ECO:0007829" key="75">
    <source>
        <dbReference type="PDB" id="4PKV"/>
    </source>
</evidence>
<evidence type="ECO:0007829" key="76">
    <source>
        <dbReference type="PDB" id="4PKW"/>
    </source>
</evidence>
<evidence type="ECO:0007829" key="77">
    <source>
        <dbReference type="PDB" id="5D1S"/>
    </source>
</evidence>
<evidence type="ECO:0007829" key="78">
    <source>
        <dbReference type="PDB" id="5D1T"/>
    </source>
</evidence>
<accession>P15917</accession>
<accession>Q8KYJ6</accession>
<accession>Q933F6</accession>
<reference key="1">
    <citation type="journal article" date="1989" name="Gene">
        <title>Nucleotide sequence and analysis of the lethal factor gene (lef) from Bacillus anthracis.</title>
        <authorList>
            <person name="Bragg T.S."/>
            <person name="Robertson D.L."/>
        </authorList>
    </citation>
    <scope>NUCLEOTIDE SEQUENCE [GENOMIC DNA]</scope>
    <scope>PROTEIN SEQUENCE OF 34-49</scope>
    <scope>SUBCELLULAR LOCATION</scope>
</reference>
<reference key="2">
    <citation type="submission" date="1990-04" db="EMBL/GenBank/DDBJ databases">
        <title>A comparison of Bacillus anthracis sequences.</title>
        <authorList>
            <person name="Lowe J."/>
        </authorList>
    </citation>
    <scope>NUCLEOTIDE SEQUENCE [GENOMIC DNA]</scope>
</reference>
<reference key="3">
    <citation type="journal article" date="1999" name="J. Bacteriol.">
        <title>Sequence and organization of pXO1, the large Bacillus anthracis plasmid harboring the anthrax toxin genes.</title>
        <authorList>
            <person name="Okinaka R.T."/>
            <person name="Cloud K."/>
            <person name="Hampton O."/>
            <person name="Hoffmaster A.R."/>
            <person name="Hill K.K."/>
            <person name="Keim P."/>
            <person name="Koehler T.M."/>
            <person name="Lamke G."/>
            <person name="Kumano S."/>
            <person name="Mahillon J."/>
            <person name="Manter D."/>
            <person name="Martinez Y."/>
            <person name="Ricke D."/>
            <person name="Svensson R."/>
            <person name="Jackson P.J."/>
        </authorList>
    </citation>
    <scope>NUCLEOTIDE SEQUENCE [LARGE SCALE GENOMIC DNA]</scope>
    <source>
        <strain>Sterne</strain>
    </source>
</reference>
<reference key="4">
    <citation type="journal article" date="2002" name="Science">
        <title>Comparative genome sequencing for discovery of novel polymorphisms in Bacillus anthracis.</title>
        <authorList>
            <person name="Read T.D."/>
            <person name="Salzberg S.L."/>
            <person name="Pop M."/>
            <person name="Shumway M.F."/>
            <person name="Umayam L."/>
            <person name="Jiang L."/>
            <person name="Holtzapple E."/>
            <person name="Busch J.D."/>
            <person name="Smith K.L."/>
            <person name="Schupp J.M."/>
            <person name="Solomon D."/>
            <person name="Keim P."/>
            <person name="Fraser C.M."/>
        </authorList>
    </citation>
    <scope>NUCLEOTIDE SEQUENCE [GENOMIC DNA]</scope>
    <source>
        <strain>Ames / isolate Florida / A2012</strain>
    </source>
</reference>
<reference key="5">
    <citation type="journal article" date="2009" name="J. Bacteriol.">
        <title>The complete genome sequence of Bacillus anthracis Ames 'Ancestor'.</title>
        <authorList>
            <person name="Ravel J."/>
            <person name="Jiang L."/>
            <person name="Stanley S.T."/>
            <person name="Wilson M.R."/>
            <person name="Decker R.S."/>
            <person name="Read T.D."/>
            <person name="Worsham P."/>
            <person name="Keim P.S."/>
            <person name="Salzberg S.L."/>
            <person name="Fraser-Liggett C.M."/>
            <person name="Rasko D.A."/>
        </authorList>
    </citation>
    <scope>NUCLEOTIDE SEQUENCE [LARGE SCALE GENOMIC DNA]</scope>
    <source>
        <strain>Ames ancestor</strain>
    </source>
</reference>
<reference key="6">
    <citation type="journal article" date="2002" name="J. Appl. Microbiol.">
        <title>Sequence analysis of the genes encoding for the major virulence factors of Bacillus anthracis vaccine strain 'Carbosap'.</title>
        <authorList>
            <person name="Adone R."/>
            <person name="Pasquali P."/>
            <person name="La Rosa G."/>
            <person name="Marianelli C."/>
            <person name="Muscillo M."/>
            <person name="Fasanella A."/>
            <person name="Francia M."/>
            <person name="Ciuchini F."/>
        </authorList>
    </citation>
    <scope>NUCLEOTIDE SEQUENCE [GENOMIC DNA] OF 29-809</scope>
    <source>
        <strain>Carbosap</strain>
        <strain>Ferrara</strain>
    </source>
</reference>
<reference key="7">
    <citation type="journal article" date="1986" name="J. Biol. Chem.">
        <title>Macrophages are sensitive to anthrax lethal toxin through an acid-dependent process.</title>
        <authorList>
            <person name="Friedlander A.M."/>
        </authorList>
    </citation>
    <scope>FUNCTION</scope>
    <scope>SUBCELLULAR LOCATION</scope>
</reference>
<reference key="8">
    <citation type="journal article" date="1992" name="J. Biol. Chem.">
        <title>Functional characterization of protease-treated Bacillus anthracis protective antigen.</title>
        <authorList>
            <person name="Novak J.M."/>
            <person name="Stein M.P."/>
            <person name="Little S.F."/>
            <person name="Leppla S.H."/>
            <person name="Friedlander A.M."/>
        </authorList>
    </citation>
    <scope>SUBCELLULAR LOCATION</scope>
</reference>
<reference key="9">
    <citation type="journal article" date="1993" name="Infect. Immun.">
        <title>Characterization of macrophage sensitivity and resistance to anthrax lethal toxin.</title>
        <authorList>
            <person name="Friedlander A.M."/>
            <person name="Bhatnagar R."/>
            <person name="Leppla S.H."/>
            <person name="Johnson L."/>
            <person name="Singh Y."/>
        </authorList>
    </citation>
    <scope>FUNCTION</scope>
    <scope>SUBCELLULAR LOCATION</scope>
</reference>
<reference key="10">
    <citation type="journal article" date="1998" name="Science">
        <title>Proteolytic inactivation of MAP-kinase-kinase by anthrax lethal factor.</title>
        <authorList>
            <person name="Duesbery N.S."/>
            <person name="Webb C.P."/>
            <person name="Leppla S.H."/>
            <person name="Gordon V.M."/>
            <person name="Klimpel K.R."/>
            <person name="Copeland T.D."/>
            <person name="Ahn N.G."/>
            <person name="Oskarsson M.K."/>
            <person name="Fukasawa K."/>
            <person name="Paull K.D."/>
            <person name="Vande Woude G.F."/>
        </authorList>
    </citation>
    <scope>FUNCTION</scope>
    <scope>CATALYTIC ACTIVITY</scope>
</reference>
<reference key="11">
    <citation type="journal article" date="1998" name="Biochem. Biophys. Res. Commun.">
        <title>Anthrax lethal factor cleaves the N-terminus of MAPKKs and induces tyrosine/threonine phosphorylation of MAPKs in cultured macrophages.</title>
        <authorList>
            <person name="Vitale G."/>
            <person name="Pellizzari R."/>
            <person name="Recchi C."/>
            <person name="Napolitani G."/>
            <person name="Mock M."/>
            <person name="Montecucco C."/>
        </authorList>
    </citation>
    <scope>FUNCTION</scope>
</reference>
<reference key="12">
    <citation type="journal article" date="1999" name="J. Appl. Microbiol.">
        <title>Anthrax lethal factor causes proteolytic inactivation of mitogen-activated protein kinase kinase.</title>
        <authorList>
            <person name="Duesbery N.S."/>
            <person name="Vande Woude G.F."/>
        </authorList>
    </citation>
    <scope>FUNCTION</scope>
</reference>
<reference key="13">
    <citation type="journal article" date="1999" name="Infect. Immun.">
        <title>Oligomerization of anthrax toxin protective antigen and binding of lethal factor during endocytic uptake into mammalian cells.</title>
        <authorList>
            <person name="Singh Y."/>
            <person name="Klimpel K.R."/>
            <person name="Goel S."/>
            <person name="Swain P.K."/>
            <person name="Leppla S.H."/>
        </authorList>
    </citation>
    <scope>INTERACTION WITH PA</scope>
    <scope>SUBCELLULAR LOCATION</scope>
</reference>
<reference key="14">
    <citation type="journal article" date="2000" name="Biochem. J.">
        <title>Susceptibility of mitogen-activated protein kinase kinase family members to proteolysis by anthrax lethal factor.</title>
        <authorList>
            <person name="Vitale G."/>
            <person name="Bernardi L."/>
            <person name="Napolitani G."/>
            <person name="Mock M."/>
            <person name="Montecucco C."/>
        </authorList>
    </citation>
    <scope>FUNCTION</scope>
</reference>
<reference key="15">
    <citation type="journal article" date="1999" name="Infect. Immun.">
        <title>Proteasome activity is required for anthrax lethal toxin to kill macrophages.</title>
        <authorList>
            <person name="Tang G."/>
            <person name="Leppla S.H."/>
        </authorList>
    </citation>
    <scope>FUNCTION</scope>
</reference>
<reference key="16">
    <citation type="journal article" date="1996" name="Biochemistry">
        <title>Secondary structure of anthrax lethal toxin proteins and their interaction with large unilamellar vesicles: a Fourier-transform infrared spectroscopy approach.</title>
        <authorList>
            <person name="Wang X.-M."/>
            <person name="Mock M."/>
            <person name="Ruysschaert J.-M."/>
            <person name="Cabiaux V."/>
        </authorList>
    </citation>
    <scope>INTERACTION WITH PA</scope>
</reference>
<reference key="17">
    <citation type="journal article" date="1994" name="FEMS Microbiol. Lett.">
        <title>Zinc content of the Bacillus anthracis lethal factor.</title>
        <authorList>
            <person name="Kochi S.K."/>
            <person name="Schiavo G."/>
            <person name="Mock M."/>
            <person name="Montecucco C."/>
        </authorList>
    </citation>
    <scope>ZINC-BINDING</scope>
</reference>
<reference key="18">
    <citation type="journal article" date="1994" name="J. Bacteriol.">
        <title>The three Bacillus anthracis toxin genes are coordinately regulated by bicarbonate and temperature.</title>
        <authorList>
            <person name="Sirard J.-C."/>
            <person name="Mock M."/>
            <person name="Fouet A."/>
        </authorList>
    </citation>
    <scope>INDUCTION</scope>
    <source>
        <strain>Sterne</strain>
    </source>
</reference>
<reference key="19">
    <citation type="journal article" date="1998" name="Infect. Immun.">
        <title>Lethal factor active-site mutations affect catalytic activity in vitro.</title>
        <authorList>
            <person name="Hammond S.E."/>
            <person name="Hanna P.C."/>
        </authorList>
    </citation>
    <scope>MUTAGENESIS OF HIS-719; GLU-720 AND HIS-723</scope>
    <scope>ACTIVE SITE</scope>
    <source>
        <strain>Sterne</strain>
    </source>
</reference>
<reference key="20">
    <citation type="journal article" date="2001" name="Biochem. Biophys. Res. Commun.">
        <title>Involvement of residues 147VYYEIGK153 in binding of lethal factor to protective antigen of Bacillus anthracis.</title>
        <authorList>
            <person name="Gupta P."/>
            <person name="Singh A."/>
            <person name="Chauhan V."/>
            <person name="Bhatnagar R."/>
        </authorList>
    </citation>
    <scope>MUTAGENESIS OF VAL-180; TYR-181; TYR-182; GLU-183; ILE-184; GLY-185 AND LYS-186</scope>
    <source>
        <strain>Sterne</strain>
    </source>
</reference>
<reference key="21">
    <citation type="journal article" date="2001" name="Toxicon">
        <title>Toxins of Bacillus anthracis.</title>
        <authorList>
            <person name="Brossier F."/>
            <person name="Mock M."/>
        </authorList>
    </citation>
    <scope>REVIEW</scope>
</reference>
<reference key="22">
    <citation type="journal article" date="2002" name="FEMS Microbiol. Lett.">
        <title>Asp 187 and Phe 190 residues in lethal factor are required for the expression of anthrax lethal toxin activity.</title>
        <authorList>
            <person name="Singh A."/>
            <person name="Chauhan V."/>
            <person name="Sodhi A."/>
            <person name="Bhatnagar R."/>
        </authorList>
    </citation>
    <scope>MUTAGENESIS OF ASP-220; LEU-221; LEU-222 AND PHE-223</scope>
    <source>
        <strain>Sterne</strain>
    </source>
</reference>
<reference key="23">
    <citation type="journal article" date="2003" name="J. Cell Biol.">
        <title>Anthrax toxin triggers endocytosis of its receptor via a lipid raft-mediated clathrin-dependent process.</title>
        <authorList>
            <person name="Abrami L."/>
            <person name="Liu S."/>
            <person name="Cosson P."/>
            <person name="Leppla S.H."/>
            <person name="van der Goot F.G."/>
        </authorList>
    </citation>
    <scope>SUBCELLULAR LOCATION</scope>
</reference>
<reference key="24">
    <citation type="journal article" date="2004" name="Biochem. Biophys. Res. Commun.">
        <title>Anthrax toxin complexes: heptameric protective antigen can bind lethal factor and edema factor simultaneously.</title>
        <authorList>
            <person name="Pimental R.A."/>
            <person name="Christensen K.A."/>
            <person name="Krantz B.A."/>
            <person name="Collier R.J."/>
        </authorList>
    </citation>
    <scope>INTERACTION WITH PA</scope>
</reference>
<reference key="25">
    <citation type="journal article" date="2006" name="Nat. Genet.">
        <title>Nalp1b controls mouse macrophage susceptibility to anthrax lethal toxin.</title>
        <authorList>
            <person name="Boyden E.D."/>
            <person name="Dietrich W.F."/>
        </authorList>
    </citation>
    <scope>FUNCTION</scope>
</reference>
<reference key="26">
    <citation type="journal article" date="2009" name="Infect. Immun.">
        <title>Expression of Nlrp1b inflammasome components in human fibroblasts confers susceptibility to anthrax lethal toxin.</title>
        <authorList>
            <person name="Liao K.C."/>
            <person name="Mogridge J."/>
        </authorList>
    </citation>
    <scope>FUNCTION</scope>
    <scope>MUTAGENESIS OF GLU-720</scope>
    <scope>ACTIVE SITE</scope>
</reference>
<reference key="27">
    <citation type="journal article" date="2019" name="EMBO J.">
        <title>The N-end rule ubiquitin ligase UBR2 mediates NLRP1B inflammasome activation by anthrax lethal toxin.</title>
        <authorList>
            <person name="Xu H."/>
            <person name="Shi J."/>
            <person name="Gao H."/>
            <person name="Liu Y."/>
            <person name="Yang Z."/>
            <person name="Shao F."/>
            <person name="Dong N."/>
        </authorList>
    </citation>
    <scope>FUNCTION</scope>
</reference>
<reference key="28">
    <citation type="journal article" date="2019" name="Science">
        <title>N-terminal degradation activates the NLRP1B inflammasome.</title>
        <authorList>
            <person name="Chui A.J."/>
            <person name="Okondo M.C."/>
            <person name="Rao S.D."/>
            <person name="Gai K."/>
            <person name="Griswold A.R."/>
            <person name="Johnson D.C."/>
            <person name="Ball D.P."/>
            <person name="Taabazuing C.Y."/>
            <person name="Orth E.L."/>
            <person name="Vittimberga B.A."/>
            <person name="Bachovchin D.A."/>
        </authorList>
    </citation>
    <scope>FUNCTION</scope>
</reference>
<reference evidence="40 41" key="29">
    <citation type="journal article" date="2001" name="Nature">
        <title>Crystal structure of the anthrax lethal factor.</title>
        <authorList>
            <person name="Pannifer A.D."/>
            <person name="Wong T.Y."/>
            <person name="Schwarzenbacher R."/>
            <person name="Renatus M."/>
            <person name="Petosa C."/>
            <person name="Bienkowska J."/>
            <person name="Lacy D.B."/>
            <person name="Collier R.J."/>
            <person name="Park S."/>
            <person name="Leppla S.H."/>
            <person name="Hanna P.C."/>
            <person name="Liddington R.C."/>
        </authorList>
    </citation>
    <scope>X-RAY CRYSTALLOGRAPHY (2.2 ANGSTROMS) IN COMPLEX WITH ZINC IONS AND MAP2K2</scope>
    <scope>COFACTOR</scope>
    <scope>DOMAIN</scope>
    <scope>SUBCELLULAR LOCATION</scope>
</reference>
<reference evidence="43 44 45 46" key="30">
    <citation type="journal article" date="2004" name="Nat. Struct. Mol. Biol.">
        <title>The structural basis for substrate and inhibitor selectivity of the anthrax lethal factor.</title>
        <authorList>
            <person name="Turk B.E."/>
            <person name="Wong T.Y."/>
            <person name="Schwarzenbacher R."/>
            <person name="Jarrell E.T."/>
            <person name="Leppla S.H."/>
            <person name="Collier R.J."/>
            <person name="Liddington R.C."/>
            <person name="Cantley L.C."/>
        </authorList>
    </citation>
    <scope>X-RAY CRYSTALLOGRAPHY (3.52 ANGSTROMS) OF 34-809 IN COMPLEX WITH ZINC IONS AND PEPTIDE SUBSTRATE ANALOG</scope>
    <scope>COFACTOR</scope>
</reference>
<reference evidence="42" key="31">
    <citation type="journal article" date="2004" name="Nat. Struct. Mol. Biol.">
        <title>Identification of small molecule inhibitors of anthrax lethal factor.</title>
        <authorList>
            <person name="Panchal R.G."/>
            <person name="Hermone A.R."/>
            <person name="Nguyen T.L."/>
            <person name="Wong T.Y."/>
            <person name="Schwarzenbacher R."/>
            <person name="Schmidt J."/>
            <person name="Lane D."/>
            <person name="McGrath C."/>
            <person name="Turk B.E."/>
            <person name="Burnett J."/>
            <person name="Aman M.J."/>
            <person name="Little S."/>
            <person name="Sausville E.A."/>
            <person name="Zaharevitz D.W."/>
            <person name="Cantley L.C."/>
            <person name="Liddington R.C."/>
            <person name="Gussio R."/>
            <person name="Bavari S."/>
        </authorList>
    </citation>
    <scope>X-RAY CRYSTALLOGRAPHY (2.90 ANGSTROMS) OF 34-809 IN COMPLEX WITH ZINC AND NSC-12155 INHIBITOR</scope>
    <scope>FUNCTION</scope>
    <scope>CATALYTIC ACTIVITY</scope>
    <scope>ACTIVITY REGULATION</scope>
    <scope>COFACTOR</scope>
</reference>
<reference evidence="47" key="32">
    <citation type="journal article" date="2005" name="Proc. Natl. Acad. Sci. U.S.A.">
        <title>Anthrax lethal factor inhibition.</title>
        <authorList>
            <person name="Shoop W.L."/>
            <person name="Xiong Y."/>
            <person name="Wiltsie J."/>
            <person name="Woods A."/>
            <person name="Guo J."/>
            <person name="Pivnichny J.V."/>
            <person name="Felcetto T."/>
            <person name="Michael B.F."/>
            <person name="Bansal A."/>
            <person name="Cummings R.T."/>
            <person name="Cunningham B.R."/>
            <person name="Friedlander A.M."/>
            <person name="Douglas C.M."/>
            <person name="Patel S.B."/>
            <person name="Wisniewski D."/>
            <person name="Scapin G."/>
            <person name="Salowe S.P."/>
            <person name="Zaller D.M."/>
            <person name="Chapman K.T."/>
            <person name="Scolnick E.M."/>
            <person name="Schmatz D.M."/>
            <person name="Bartizal K."/>
            <person name="MacCoss M."/>
            <person name="Hermes J.D."/>
        </authorList>
    </citation>
    <scope>X-RAY CRYSTALLOGRAPHY (2.3 ANGSTROMS) OF 297-809 IN COMPLEX WITH ZINC IONS AND PROTEASE INHIBITOR</scope>
    <scope>COFACTOR</scope>
</reference>
<reference evidence="48" key="33">
    <citation type="journal article" date="2010" name="Biochemistry">
        <title>Conformational dynamics of the anthrax lethal factor catalytic center.</title>
        <authorList>
            <person name="Dalkas G.A."/>
            <person name="Chasapis C.T."/>
            <person name="Gkazonis P.V."/>
            <person name="Bentrop D."/>
            <person name="Spyroulias G.A."/>
        </authorList>
    </citation>
    <scope>STRUCTURE BY NMR OF 705-809</scope>
</reference>
<reference evidence="49" key="34">
    <citation type="journal article" date="2010" name="Nat. Struct. Mol. Biol.">
        <title>Structural basis for the unfolding of anthrax lethal factor by protective antigen oligomers.</title>
        <authorList>
            <person name="Feld G.K."/>
            <person name="Thoren K.L."/>
            <person name="Kintzer A.F."/>
            <person name="Sterling H.J."/>
            <person name="Tang I.I."/>
            <person name="Greenberg S.G."/>
            <person name="Williams E.R."/>
            <person name="Krantz B.A."/>
        </authorList>
    </citation>
    <scope>X-RAY CRYSTALLOGRAPHY (3.10 ANGSTROMS) OF 34-296 IN COMPLEX WITH PA-63</scope>
    <scope>INTERACTION WITH PA</scope>
    <scope>SUBCELLULAR LOCATION</scope>
    <scope>MUTAGENESIS OF HIS-68; LEU-69; ILE-72; MET-73; HIS-75; ILE-76 AND TYR-269</scope>
</reference>
<reference evidence="50" key="35">
    <citation type="journal article" date="2012" name="Bioorg. Med. Chem. Lett.">
        <title>Antidotes to anthrax lethal factor intoxication. Part 3: Evaluation of core structures and further modifications to the C2-side chain.</title>
        <authorList>
            <person name="Jiao G.S."/>
            <person name="Kim S."/>
            <person name="Moayeri M."/>
            <person name="Crown D."/>
            <person name="Thai A."/>
            <person name="Cregar-Hernandez L."/>
            <person name="McKasson L."/>
            <person name="Sankaran B."/>
            <person name="Lehrer A."/>
            <person name="Wong T."/>
            <person name="Johns L."/>
            <person name="Margosiak S.A."/>
            <person name="Leppla S.H."/>
            <person name="Johnson A.T."/>
        </authorList>
    </citation>
    <scope>X-RAY CRYSTALLOGRAPHY (1.63 ANGSTROMS) OF 296-809 IN COMPLEX WITH ZINC</scope>
    <scope>COFACTOR</scope>
    <scope>ACTIVITY REGULATION</scope>
</reference>
<reference evidence="51 52 53 54 55 56 57" key="36">
    <citation type="journal article" date="2014" name="Acta Crystallogr. D">
        <title>Anthrax toxin lethal factor domain 3 is highly mobile and responsive to ligand binding.</title>
        <authorList>
            <person name="Maize K.M."/>
            <person name="Kurbanov E.K."/>
            <person name="De La Mora-Rey T."/>
            <person name="Geders T.W."/>
            <person name="Hwang D.J."/>
            <person name="Walters M.A."/>
            <person name="Johnson R.L."/>
            <person name="Amin E.A."/>
            <person name="Finzel B.C."/>
        </authorList>
    </citation>
    <scope>X-RAY CRYSTALLOGRAPHY (1.75 ANGSTROMS) OF 298-809 IN COMPLEX WITH ZINC</scope>
    <scope>COFACTOR</scope>
    <scope>ACTIVITY REGULATION</scope>
</reference>
<reference evidence="59 60 61" key="37">
    <citation type="journal article" date="2015" name="FEBS Lett.">
        <title>Ligand-induced expansion of the S1' site in the anthrax toxin lethal factor.</title>
        <authorList>
            <person name="Maize K.M."/>
            <person name="Kurbanov E.K."/>
            <person name="Johnson R.L."/>
            <person name="Amin E.A."/>
            <person name="Finzel B.C."/>
        </authorList>
    </citation>
    <scope>X-RAY CRYSTALLOGRAPHY (2.35 ANGSTROMS) OF 298-809 IN COMPLEX WITH ZINC</scope>
    <scope>COFACTOR</scope>
    <scope>ACTIVITY REGULATION</scope>
</reference>
<reference evidence="58 62 63 64" key="38">
    <citation type="journal article" date="2015" name="J. Med. Chem.">
        <title>Probing the S2' subsite of the anthrax toxin lethal factor using novel N-alkylated hydroxamates.</title>
        <authorList>
            <person name="Kurbanov E.K."/>
            <person name="Chiu T.L."/>
            <person name="Solberg J."/>
            <person name="Francis S."/>
            <person name="Maize K.M."/>
            <person name="Fernandez J."/>
            <person name="Johnson R.L."/>
            <person name="Hawkinson J.E."/>
            <person name="Walters M.A."/>
            <person name="Finzel B.C."/>
            <person name="Amin E.A."/>
        </authorList>
    </citation>
    <scope>X-RAY CRYSTALLOGRAPHY (2.10 ANGSTROMS) OF 298-809 IN COMPLEX WITH ZINC</scope>
    <scope>COFACTOR</scope>
    <scope>ACTIVITY REGULATION</scope>
</reference>
<reference evidence="65" key="39">
    <citation type="journal article" date="2020" name="Nat. Commun.">
        <title>Atomic structures of anthrax toxin protective antigen channels bound to partially unfolded lethal and edema factors.</title>
        <authorList>
            <person name="Hardenbrook N.J."/>
            <person name="Liu S."/>
            <person name="Zhou K."/>
            <person name="Ghosal K."/>
            <person name="Hong Zhou Z."/>
            <person name="Krantz B.A."/>
        </authorList>
    </citation>
    <scope>STRUCTURE BY ELECTRON MICROSCOPY (4.60 ANGSTROMS) IN COMPLEX WITH PA</scope>
    <scope>INTERACTION WITH PA</scope>
    <scope>SUBCELLULAR LOCATION</scope>
</reference>
<reference evidence="67 68 69" key="40">
    <citation type="journal article" date="2020" name="PLoS Pathog.">
        <title>Cryo-EM structure of the fully-loaded asymmetric anthrax lethal toxin in its heptameric pre-pore state.</title>
        <authorList>
            <person name="Antoni C."/>
            <person name="Quentin D."/>
            <person name="Lang A.E."/>
            <person name="Aktories K."/>
            <person name="Gatsogiannis C."/>
            <person name="Raunser S."/>
        </authorList>
    </citation>
    <scope>STRUCTURE BY ELECTRON MICROSCOPY (3.50 ANGSTROMS) IN COMPLEX WITH PA</scope>
    <scope>INTERACTION WITH PA</scope>
    <scope>SUBCELLULAR LOCATION</scope>
</reference>
<reference evidence="66" key="41">
    <citation type="journal article" date="2020" name="Structure">
        <title>Atomic structures of anthrax prechannel bound with full-length Lethal and Edema factors.</title>
        <authorList>
            <person name="Zhou K."/>
            <person name="Liu S."/>
            <person name="Hardenbrook N.J."/>
            <person name="Cui Y."/>
            <person name="Krantz B.A."/>
            <person name="Zhou Z.H."/>
        </authorList>
    </citation>
    <scope>STRUCTURE BY ELECTRON MICROSCOPY (3.30 ANGSTROMS) OF 62-801 IN COMPLEX WITH PA</scope>
    <scope>INTERACTION WITH PA</scope>
    <scope>SUBCELLULAR LOCATION</scope>
</reference>
<keyword id="KW-0002">3D-structure</keyword>
<keyword id="KW-0903">Direct protein sequencing</keyword>
<keyword id="KW-1035">Host cytoplasm</keyword>
<keyword id="KW-0378">Hydrolase</keyword>
<keyword id="KW-0479">Metal-binding</keyword>
<keyword id="KW-0482">Metalloprotease</keyword>
<keyword id="KW-0614">Plasmid</keyword>
<keyword id="KW-0645">Protease</keyword>
<keyword id="KW-1185">Reference proteome</keyword>
<keyword id="KW-0677">Repeat</keyword>
<keyword id="KW-0964">Secreted</keyword>
<keyword id="KW-0732">Signal</keyword>
<keyword id="KW-0800">Toxin</keyword>
<keyword id="KW-0843">Virulence</keyword>
<keyword id="KW-0862">Zinc</keyword>
<sequence>MNIKKEFIKVISMSCLVTAITLSGPVFIPLVQGAGGHGDVGMHVKEKEKNKDENKRKDEERNKTQEEHLKEIMKHIVKIEVKGEEAVKKEAAEKLLEKVPSDVLEMYKAIGGKIYIVDGDITKHISLEALSEDKKKIKDIYGKDALLHEHYVYAKEGYEPVLVIQSSEDYVENTEKALNVYYEIGKILSRDILSKINQPYQKFLDVLNTIKNASDSDGQDLLFTNQLKEHPTDFSVEFLEQNSNEVQEVFAKAFAYYIEPQHRDVLQLYAPEAFNYMDKFNEQEINLSLEELKDQRMLARYEKWEKIKQHYQHWSDSLSEEGRGLLKKLQIPIEPKKDDIIHSLSQEEKELLKRIQIDSSDFLSTEEKEFLKKLQIDIRDSLSEEEKELLNRIQVDSSNPLSEKEKEFLKKLKLDIQPYDINQRLQDTGGLIDSPSINLDVRKQYKRDIQNIDALLHQSIGSTLYNKIYLYENMNINNLTATLGADLVDSTDNTKINRGIFNEFKKNFKYSISSNYMIVDINERPALDNERLKWRIQLSPDTRAGYLENGKLILQRNIGLEIKDVQIIKQSEKEYIRIDAKVVPKSKIDTKIQEAQLNINQEWNKALGLPKYTKLITFNVHNRYASNIVESAYLILNEWKNNIQSDLIKKVTNYLVDGNGRFVFTDITLPNIAEQYTHQDEIYEQVHSKGLYVPESRSILLHGPSKGVELRNDSEGFIHEFGHAVDDYAGYLLDKNQSDLVTNSKKFIDIFKEEGSNLTSYGRTNEAEFFAEAFRLMHSTDHAERLKVQKNAPKTFQFINDQIKFIINS</sequence>
<gene>
    <name evidence="38" type="primary">lef</name>
    <name type="ordered locus">pXO1-107</name>
    <name type="ordered locus">BXA0172</name>
    <name type="ordered locus">GBAA_pXO1_0172</name>
</gene>
<proteinExistence type="evidence at protein level"/>